<feature type="chain" id="PRO_0000095574" description="Ferric uptake regulation protein">
    <location>
        <begin position="1"/>
        <end position="136"/>
    </location>
</feature>
<feature type="region of interest" description="DNA-binding" evidence="1">
    <location>
        <begin position="1"/>
        <end position="85"/>
    </location>
</feature>
<feature type="region of interest" description="Dimerization" evidence="1">
    <location>
        <begin position="86"/>
        <end position="136"/>
    </location>
</feature>
<feature type="binding site" evidence="1">
    <location>
        <position position="88"/>
    </location>
    <ligand>
        <name>Fe cation</name>
        <dbReference type="ChEBI" id="CHEBI:24875"/>
    </ligand>
</feature>
<feature type="binding site" evidence="1">
    <location>
        <position position="90"/>
    </location>
    <ligand>
        <name>Fe cation</name>
        <dbReference type="ChEBI" id="CHEBI:24875"/>
    </ligand>
</feature>
<feature type="binding site" evidence="1">
    <location>
        <position position="94"/>
    </location>
    <ligand>
        <name>Zn(2+)</name>
        <dbReference type="ChEBI" id="CHEBI:29105"/>
    </ligand>
</feature>
<feature type="binding site" evidence="1">
    <location>
        <position position="97"/>
    </location>
    <ligand>
        <name>Zn(2+)</name>
        <dbReference type="ChEBI" id="CHEBI:29105"/>
    </ligand>
</feature>
<feature type="binding site" evidence="1">
    <location>
        <position position="109"/>
    </location>
    <ligand>
        <name>Fe cation</name>
        <dbReference type="ChEBI" id="CHEBI:24875"/>
    </ligand>
</feature>
<feature type="binding site" evidence="1">
    <location>
        <position position="123"/>
    </location>
    <ligand>
        <name>Fe cation</name>
        <dbReference type="ChEBI" id="CHEBI:24875"/>
    </ligand>
</feature>
<keyword id="KW-0963">Cytoplasm</keyword>
<keyword id="KW-0238">DNA-binding</keyword>
<keyword id="KW-0408">Iron</keyword>
<keyword id="KW-0479">Metal-binding</keyword>
<keyword id="KW-0678">Repressor</keyword>
<keyword id="KW-0804">Transcription</keyword>
<keyword id="KW-0805">Transcription regulation</keyword>
<keyword id="KW-0862">Zinc</keyword>
<reference key="1">
    <citation type="journal article" date="2001" name="Lancet">
        <title>Whole genome sequencing of meticillin-resistant Staphylococcus aureus.</title>
        <authorList>
            <person name="Kuroda M."/>
            <person name="Ohta T."/>
            <person name="Uchiyama I."/>
            <person name="Baba T."/>
            <person name="Yuzawa H."/>
            <person name="Kobayashi I."/>
            <person name="Cui L."/>
            <person name="Oguchi A."/>
            <person name="Aoki K."/>
            <person name="Nagai Y."/>
            <person name="Lian J.-Q."/>
            <person name="Ito T."/>
            <person name="Kanamori M."/>
            <person name="Matsumaru H."/>
            <person name="Maruyama A."/>
            <person name="Murakami H."/>
            <person name="Hosoyama A."/>
            <person name="Mizutani-Ui Y."/>
            <person name="Takahashi N.K."/>
            <person name="Sawano T."/>
            <person name="Inoue R."/>
            <person name="Kaito C."/>
            <person name="Sekimizu K."/>
            <person name="Hirakawa H."/>
            <person name="Kuhara S."/>
            <person name="Goto S."/>
            <person name="Yabuzaki J."/>
            <person name="Kanehisa M."/>
            <person name="Yamashita A."/>
            <person name="Oshima K."/>
            <person name="Furuya K."/>
            <person name="Yoshino C."/>
            <person name="Shiba T."/>
            <person name="Hattori M."/>
            <person name="Ogasawara N."/>
            <person name="Hayashi H."/>
            <person name="Hiramatsu K."/>
        </authorList>
    </citation>
    <scope>NUCLEOTIDE SEQUENCE [LARGE SCALE GENOMIC DNA]</scope>
    <source>
        <strain>N315</strain>
    </source>
</reference>
<protein>
    <recommendedName>
        <fullName>Ferric uptake regulation protein</fullName>
        <shortName>Ferric uptake regulator</shortName>
    </recommendedName>
</protein>
<accession>P0A033</accession>
<accession>Q9R3G5</accession>
<gene>
    <name type="primary">fur</name>
    <name type="synonym">furA</name>
    <name type="synonym">mreR</name>
    <name type="ordered locus">SA1383</name>
</gene>
<sequence length="136" mass="15922">MNTNDAIKILKENGLKYTDKRKDMLDIFVEEDKYINAKYIQQVMDENYPGISFDTIYRNLHLFKDLGIIENTELDGEMKFRIACTNHHHHHFICEKCGDTKVIDYCPIDQIKLSLPGVNIHKHKLEVYGVCESCQD</sequence>
<name>FUR_STAAN</name>
<dbReference type="EMBL" id="BA000018">
    <property type="protein sequence ID" value="BAB42646.1"/>
    <property type="molecule type" value="Genomic_DNA"/>
</dbReference>
<dbReference type="PIR" id="A89936">
    <property type="entry name" value="A89936"/>
</dbReference>
<dbReference type="RefSeq" id="WP_001095260.1">
    <property type="nucleotide sequence ID" value="NC_002745.2"/>
</dbReference>
<dbReference type="SMR" id="P0A033"/>
<dbReference type="EnsemblBacteria" id="BAB42646">
    <property type="protein sequence ID" value="BAB42646"/>
    <property type="gene ID" value="BAB42646"/>
</dbReference>
<dbReference type="KEGG" id="sau:SA1383"/>
<dbReference type="HOGENOM" id="CLU_096072_5_1_9"/>
<dbReference type="GO" id="GO:0005737">
    <property type="term" value="C:cytoplasm"/>
    <property type="evidence" value="ECO:0007669"/>
    <property type="project" value="UniProtKB-SubCell"/>
</dbReference>
<dbReference type="GO" id="GO:0003700">
    <property type="term" value="F:DNA-binding transcription factor activity"/>
    <property type="evidence" value="ECO:0007669"/>
    <property type="project" value="InterPro"/>
</dbReference>
<dbReference type="GO" id="GO:0000976">
    <property type="term" value="F:transcription cis-regulatory region binding"/>
    <property type="evidence" value="ECO:0007669"/>
    <property type="project" value="TreeGrafter"/>
</dbReference>
<dbReference type="GO" id="GO:0008270">
    <property type="term" value="F:zinc ion binding"/>
    <property type="evidence" value="ECO:0007669"/>
    <property type="project" value="TreeGrafter"/>
</dbReference>
<dbReference type="GO" id="GO:0045892">
    <property type="term" value="P:negative regulation of DNA-templated transcription"/>
    <property type="evidence" value="ECO:0007669"/>
    <property type="project" value="TreeGrafter"/>
</dbReference>
<dbReference type="GO" id="GO:1900376">
    <property type="term" value="P:regulation of secondary metabolite biosynthetic process"/>
    <property type="evidence" value="ECO:0007669"/>
    <property type="project" value="TreeGrafter"/>
</dbReference>
<dbReference type="CDD" id="cd07153">
    <property type="entry name" value="Fur_like"/>
    <property type="match status" value="1"/>
</dbReference>
<dbReference type="Gene3D" id="3.30.1490.190">
    <property type="match status" value="1"/>
</dbReference>
<dbReference type="Gene3D" id="1.10.10.10">
    <property type="entry name" value="Winged helix-like DNA-binding domain superfamily/Winged helix DNA-binding domain"/>
    <property type="match status" value="1"/>
</dbReference>
<dbReference type="InterPro" id="IPR002481">
    <property type="entry name" value="FUR"/>
</dbReference>
<dbReference type="InterPro" id="IPR043135">
    <property type="entry name" value="Fur_C"/>
</dbReference>
<dbReference type="InterPro" id="IPR036388">
    <property type="entry name" value="WH-like_DNA-bd_sf"/>
</dbReference>
<dbReference type="InterPro" id="IPR036390">
    <property type="entry name" value="WH_DNA-bd_sf"/>
</dbReference>
<dbReference type="PANTHER" id="PTHR33202:SF1">
    <property type="entry name" value="FERRIC UPTAKE REGULATION PROTEIN"/>
    <property type="match status" value="1"/>
</dbReference>
<dbReference type="PANTHER" id="PTHR33202">
    <property type="entry name" value="ZINC UPTAKE REGULATION PROTEIN"/>
    <property type="match status" value="1"/>
</dbReference>
<dbReference type="Pfam" id="PF01475">
    <property type="entry name" value="FUR"/>
    <property type="match status" value="1"/>
</dbReference>
<dbReference type="SUPFAM" id="SSF46785">
    <property type="entry name" value="Winged helix' DNA-binding domain"/>
    <property type="match status" value="1"/>
</dbReference>
<proteinExistence type="inferred from homology"/>
<comment type="function">
    <text evidence="1">Acts as a global negative controlling element, employing Fe(2+) as a cofactor to bind the operator of the repressed genes.</text>
</comment>
<comment type="subunit">
    <text evidence="1">Homodimer.</text>
</comment>
<comment type="subcellular location">
    <subcellularLocation>
        <location evidence="1">Cytoplasm</location>
    </subcellularLocation>
</comment>
<comment type="similarity">
    <text evidence="2">Belongs to the Fur family.</text>
</comment>
<organism>
    <name type="scientific">Staphylococcus aureus (strain N315)</name>
    <dbReference type="NCBI Taxonomy" id="158879"/>
    <lineage>
        <taxon>Bacteria</taxon>
        <taxon>Bacillati</taxon>
        <taxon>Bacillota</taxon>
        <taxon>Bacilli</taxon>
        <taxon>Bacillales</taxon>
        <taxon>Staphylococcaceae</taxon>
        <taxon>Staphylococcus</taxon>
    </lineage>
</organism>
<evidence type="ECO:0000250" key="1"/>
<evidence type="ECO:0000305" key="2"/>